<sequence>MLGVQKKCSTRKTAARKTVVRKPAAKKTAAKKAPVRKVAAKKTVARKTVAKKTVAARKPVAKKATAKKAPVRKVAAKKTVARKTVAKKTVAARKPVAKKATAKKAPVRKAVAKKTVARKTVAKKTVAARKPVAKRVASTKKSSIAVKAGVCMKKHKHTAACGRVAASGVKVCASAAKRKTNPNRSRTAHSWRQQLMKLVAR</sequence>
<name>HC2D_CHLTR</name>
<comment type="function">
    <text>Might have a role in establishing the nucleoid structure of elementary bodies.</text>
</comment>
<comment type="developmental stage">
    <text>Specific to the EB (elementary body) form in the life cycle of chlamydiae.</text>
</comment>
<comment type="similarity">
    <text evidence="2">Belongs to the histone H1/H5 family. HCT subfamily.</text>
</comment>
<accession>Q06280</accession>
<keyword id="KW-0238">DNA-binding</keyword>
<keyword id="KW-1185">Reference proteome</keyword>
<protein>
    <recommendedName>
        <fullName>Histone-like protein HC2</fullName>
    </recommendedName>
</protein>
<feature type="chain" id="PRO_0000196023" description="Histone-like protein HC2">
    <location>
        <begin position="1"/>
        <end position="201"/>
    </location>
</feature>
<feature type="region of interest" description="Disordered" evidence="1">
    <location>
        <begin position="1"/>
        <end position="69"/>
    </location>
</feature>
<feature type="compositionally biased region" description="Basic residues" evidence="1">
    <location>
        <begin position="8"/>
        <end position="50"/>
    </location>
</feature>
<feature type="compositionally biased region" description="Basic residues" evidence="1">
    <location>
        <begin position="59"/>
        <end position="69"/>
    </location>
</feature>
<dbReference type="EMBL" id="L12963">
    <property type="protein sequence ID" value="AAA23131.1"/>
    <property type="molecule type" value="Genomic_DNA"/>
</dbReference>
<dbReference type="EMBL" id="AE001273">
    <property type="protein sequence ID" value="AAC67637.1"/>
    <property type="molecule type" value="Genomic_DNA"/>
</dbReference>
<dbReference type="PIR" id="D71563">
    <property type="entry name" value="D71563"/>
</dbReference>
<dbReference type="RefSeq" id="NP_219549.1">
    <property type="nucleotide sequence ID" value="NC_000117.1"/>
</dbReference>
<dbReference type="RefSeq" id="WP_010725004.1">
    <property type="nucleotide sequence ID" value="NC_000117.1"/>
</dbReference>
<dbReference type="STRING" id="272561.CT_046"/>
<dbReference type="EnsemblBacteria" id="AAC67637">
    <property type="protein sequence ID" value="AAC67637"/>
    <property type="gene ID" value="CT_046"/>
</dbReference>
<dbReference type="GeneID" id="884071"/>
<dbReference type="KEGG" id="ctr:CT_046"/>
<dbReference type="PATRIC" id="fig|272561.5.peg.52"/>
<dbReference type="HOGENOM" id="CLU_101293_0_0_0"/>
<dbReference type="InParanoid" id="Q06280"/>
<dbReference type="OrthoDB" id="19230at2"/>
<dbReference type="Proteomes" id="UP000000431">
    <property type="component" value="Chromosome"/>
</dbReference>
<dbReference type="GO" id="GO:0003677">
    <property type="term" value="F:DNA binding"/>
    <property type="evidence" value="ECO:0007669"/>
    <property type="project" value="UniProtKB-KW"/>
</dbReference>
<dbReference type="GO" id="GO:0030527">
    <property type="term" value="F:structural constituent of chromatin"/>
    <property type="evidence" value="ECO:0007669"/>
    <property type="project" value="InterPro"/>
</dbReference>
<dbReference type="GO" id="GO:0030261">
    <property type="term" value="P:chromosome condensation"/>
    <property type="evidence" value="ECO:0007669"/>
    <property type="project" value="InterPro"/>
</dbReference>
<dbReference type="InterPro" id="IPR009970">
    <property type="entry name" value="HC2"/>
</dbReference>
<dbReference type="NCBIfam" id="NF038052">
    <property type="entry name" value="histone_lik_HC2"/>
    <property type="match status" value="1"/>
</dbReference>
<dbReference type="Pfam" id="PF07382">
    <property type="entry name" value="HC2"/>
    <property type="match status" value="1"/>
</dbReference>
<evidence type="ECO:0000256" key="1">
    <source>
        <dbReference type="SAM" id="MobiDB-lite"/>
    </source>
</evidence>
<evidence type="ECO:0000305" key="2"/>
<reference key="1">
    <citation type="journal article" date="1993" name="Gene">
        <title>Diversity in the Chlamydia trachomatis histone homologue Hc2.</title>
        <authorList>
            <person name="Hackstadt T."/>
            <person name="Brickman T.J."/>
            <person name="Barry C.E. III"/>
            <person name="Sager J."/>
        </authorList>
    </citation>
    <scope>NUCLEOTIDE SEQUENCE [GENOMIC DNA]</scope>
    <source>
        <strain>ATCC VR-885 / DSM 19411 / UW-3/Cx</strain>
    </source>
</reference>
<reference key="2">
    <citation type="journal article" date="1998" name="Science">
        <title>Genome sequence of an obligate intracellular pathogen of humans: Chlamydia trachomatis.</title>
        <authorList>
            <person name="Stephens R.S."/>
            <person name="Kalman S."/>
            <person name="Lammel C.J."/>
            <person name="Fan J."/>
            <person name="Marathe R."/>
            <person name="Aravind L."/>
            <person name="Mitchell W.P."/>
            <person name="Olinger L."/>
            <person name="Tatusov R.L."/>
            <person name="Zhao Q."/>
            <person name="Koonin E.V."/>
            <person name="Davis R.W."/>
        </authorList>
    </citation>
    <scope>NUCLEOTIDE SEQUENCE [LARGE SCALE GENOMIC DNA]</scope>
    <source>
        <strain>ATCC VR-885 / DSM 19411 / UW-3/Cx</strain>
    </source>
</reference>
<gene>
    <name type="primary">hctB</name>
    <name type="ordered locus">CT_046</name>
</gene>
<organism>
    <name type="scientific">Chlamydia trachomatis serovar D (strain ATCC VR-885 / DSM 19411 / UW-3/Cx)</name>
    <dbReference type="NCBI Taxonomy" id="272561"/>
    <lineage>
        <taxon>Bacteria</taxon>
        <taxon>Pseudomonadati</taxon>
        <taxon>Chlamydiota</taxon>
        <taxon>Chlamydiia</taxon>
        <taxon>Chlamydiales</taxon>
        <taxon>Chlamydiaceae</taxon>
        <taxon>Chlamydia/Chlamydophila group</taxon>
        <taxon>Chlamydia</taxon>
    </lineage>
</organism>
<proteinExistence type="evidence at transcript level"/>